<reference key="1">
    <citation type="journal article" date="1998" name="Virology">
        <title>The complete genomic sequence of the modified vaccinia Ankara strain: comparison with other orthopoxviruses.</title>
        <authorList>
            <person name="Antoine G."/>
            <person name="Scheiflinger F."/>
            <person name="Dorner F."/>
            <person name="Falkner F.G."/>
        </authorList>
    </citation>
    <scope>NUCLEOTIDE SEQUENCE [LARGE SCALE GENOMIC DNA]</scope>
</reference>
<reference key="2">
    <citation type="submission" date="2004-04" db="EMBL/GenBank/DDBJ databases">
        <authorList>
            <person name="Esposito J.J."/>
            <person name="Frace M."/>
            <person name="Sammons S.A."/>
            <person name="Olsen-Rasmussen M.S."/>
            <person name="Osborne J."/>
            <person name="Khristova M."/>
            <person name="Wohlhueter R.M."/>
        </authorList>
    </citation>
    <scope>NUCLEOTIDE SEQUENCE [LARGE SCALE GENOMIC DNA]</scope>
    <source>
        <strain>Isolate Acambis 3000</strain>
    </source>
</reference>
<proteinExistence type="inferred from homology"/>
<organism>
    <name type="scientific">Vaccinia virus (strain Ankara)</name>
    <name type="common">VACV</name>
    <dbReference type="NCBI Taxonomy" id="126794"/>
    <lineage>
        <taxon>Viruses</taxon>
        <taxon>Varidnaviria</taxon>
        <taxon>Bamfordvirae</taxon>
        <taxon>Nucleocytoviricota</taxon>
        <taxon>Pokkesviricetes</taxon>
        <taxon>Chitovirales</taxon>
        <taxon>Poxviridae</taxon>
        <taxon>Chordopoxvirinae</taxon>
        <taxon>Orthopoxvirus</taxon>
        <taxon>Vaccinia virus</taxon>
    </lineage>
</organism>
<accession>O57177</accession>
<keyword id="KW-0067">ATP-binding</keyword>
<keyword id="KW-1038">Host endoplasmic reticulum</keyword>
<keyword id="KW-0418">Kinase</keyword>
<keyword id="KW-0426">Late protein</keyword>
<keyword id="KW-0547">Nucleotide-binding</keyword>
<keyword id="KW-0597">Phosphoprotein</keyword>
<keyword id="KW-0723">Serine/threonine-protein kinase</keyword>
<keyword id="KW-0808">Transferase</keyword>
<gene>
    <name type="primary">OPG054</name>
    <name type="synonym">VPK2</name>
    <name type="ordered locus">MVA039L</name>
    <name type="ordered locus">ACAM3000_MVA_039</name>
</gene>
<protein>
    <recommendedName>
        <fullName>Serine/threonine-protein kinase 2</fullName>
        <ecNumber>2.7.11.1</ecNumber>
    </recommendedName>
    <alternativeName>
        <fullName>Vaccinia protein kinase 2</fullName>
    </alternativeName>
</protein>
<name>VPK2_VACCA</name>
<evidence type="ECO:0000250" key="1">
    <source>
        <dbReference type="UniProtKB" id="Q89121"/>
    </source>
</evidence>
<evidence type="ECO:0000255" key="2">
    <source>
        <dbReference type="PROSITE-ProRule" id="PRU00159"/>
    </source>
</evidence>
<evidence type="ECO:0000255" key="3">
    <source>
        <dbReference type="PROSITE-ProRule" id="PRU10027"/>
    </source>
</evidence>
<dbReference type="EC" id="2.7.11.1"/>
<dbReference type="EMBL" id="U94848">
    <property type="protein sequence ID" value="AAB96420.1"/>
    <property type="molecule type" value="Genomic_DNA"/>
</dbReference>
<dbReference type="EMBL" id="AY603355">
    <property type="protein sequence ID" value="AAT10437.1"/>
    <property type="molecule type" value="Genomic_DNA"/>
</dbReference>
<dbReference type="PIR" id="T30787">
    <property type="entry name" value="T30787"/>
</dbReference>
<dbReference type="Proteomes" id="UP000159908">
    <property type="component" value="Segment"/>
</dbReference>
<dbReference type="Proteomes" id="UP000172909">
    <property type="component" value="Segment"/>
</dbReference>
<dbReference type="GO" id="GO:0044165">
    <property type="term" value="C:host cell endoplasmic reticulum"/>
    <property type="evidence" value="ECO:0007669"/>
    <property type="project" value="UniProtKB-SubCell"/>
</dbReference>
<dbReference type="GO" id="GO:0044172">
    <property type="term" value="C:host cell endoplasmic reticulum-Golgi intermediate compartment"/>
    <property type="evidence" value="ECO:0007669"/>
    <property type="project" value="UniProtKB-SubCell"/>
</dbReference>
<dbReference type="GO" id="GO:0005524">
    <property type="term" value="F:ATP binding"/>
    <property type="evidence" value="ECO:0007669"/>
    <property type="project" value="UniProtKB-KW"/>
</dbReference>
<dbReference type="GO" id="GO:0106310">
    <property type="term" value="F:protein serine kinase activity"/>
    <property type="evidence" value="ECO:0007669"/>
    <property type="project" value="RHEA"/>
</dbReference>
<dbReference type="GO" id="GO:0004674">
    <property type="term" value="F:protein serine/threonine kinase activity"/>
    <property type="evidence" value="ECO:0007669"/>
    <property type="project" value="UniProtKB-KW"/>
</dbReference>
<dbReference type="InterPro" id="IPR008790">
    <property type="entry name" value="Poxvirus_ser/thr_kinase"/>
</dbReference>
<dbReference type="InterPro" id="IPR000719">
    <property type="entry name" value="Prot_kinase_dom"/>
</dbReference>
<dbReference type="InterPro" id="IPR008271">
    <property type="entry name" value="Ser/Thr_kinase_AS"/>
</dbReference>
<dbReference type="Pfam" id="PF05445">
    <property type="entry name" value="Pox_ser-thr_kin"/>
    <property type="match status" value="1"/>
</dbReference>
<dbReference type="PIRSF" id="PIRSF015695">
    <property type="entry name" value="STPK_F10L"/>
    <property type="match status" value="1"/>
</dbReference>
<dbReference type="PROSITE" id="PS50011">
    <property type="entry name" value="PROTEIN_KINASE_DOM"/>
    <property type="match status" value="1"/>
</dbReference>
<dbReference type="PROSITE" id="PS00108">
    <property type="entry name" value="PROTEIN_KINASE_ST"/>
    <property type="match status" value="1"/>
</dbReference>
<comment type="function">
    <text evidence="1">Essential serine-protein kinase involved in the early stage of virion morphogenesis.</text>
</comment>
<comment type="catalytic activity">
    <reaction>
        <text>L-seryl-[protein] + ATP = O-phospho-L-seryl-[protein] + ADP + H(+)</text>
        <dbReference type="Rhea" id="RHEA:17989"/>
        <dbReference type="Rhea" id="RHEA-COMP:9863"/>
        <dbReference type="Rhea" id="RHEA-COMP:11604"/>
        <dbReference type="ChEBI" id="CHEBI:15378"/>
        <dbReference type="ChEBI" id="CHEBI:29999"/>
        <dbReference type="ChEBI" id="CHEBI:30616"/>
        <dbReference type="ChEBI" id="CHEBI:83421"/>
        <dbReference type="ChEBI" id="CHEBI:456216"/>
        <dbReference type="EC" id="2.7.11.1"/>
    </reaction>
</comment>
<comment type="catalytic activity">
    <reaction>
        <text>L-threonyl-[protein] + ATP = O-phospho-L-threonyl-[protein] + ADP + H(+)</text>
        <dbReference type="Rhea" id="RHEA:46608"/>
        <dbReference type="Rhea" id="RHEA-COMP:11060"/>
        <dbReference type="Rhea" id="RHEA-COMP:11605"/>
        <dbReference type="ChEBI" id="CHEBI:15378"/>
        <dbReference type="ChEBI" id="CHEBI:30013"/>
        <dbReference type="ChEBI" id="CHEBI:30616"/>
        <dbReference type="ChEBI" id="CHEBI:61977"/>
        <dbReference type="ChEBI" id="CHEBI:456216"/>
        <dbReference type="EC" id="2.7.11.1"/>
    </reaction>
</comment>
<comment type="subcellular location">
    <subcellularLocation>
        <location evidence="1">Host endoplasmic reticulum</location>
    </subcellularLocation>
    <subcellularLocation>
        <location evidence="1">Host endoplasmic reticulum-Golgi intermediate compartment</location>
    </subcellularLocation>
</comment>
<comment type="induction">
    <text evidence="1">Expressed in the late phase of the viral replicative cycle.</text>
</comment>
<comment type="PTM">
    <text evidence="1">Phosphorylated in vivo. Autophosphorylated in vitro.</text>
</comment>
<comment type="similarity">
    <text evidence="2">Belongs to the protein kinase superfamily. Ser/Thr protein kinase family. Poxviruses subfamily.</text>
</comment>
<feature type="chain" id="PRO_0000086795" description="Serine/threonine-protein kinase 2">
    <location>
        <begin position="1"/>
        <end position="439"/>
    </location>
</feature>
<feature type="domain" description="Protein kinase" evidence="2">
    <location>
        <begin position="87"/>
        <end position="439"/>
    </location>
</feature>
<feature type="active site" description="Proton acceptor" evidence="2 3">
    <location>
        <position position="307"/>
    </location>
</feature>
<feature type="binding site" evidence="2">
    <location>
        <begin position="93"/>
        <end position="101"/>
    </location>
    <ligand>
        <name>ATP</name>
        <dbReference type="ChEBI" id="CHEBI:30616"/>
    </ligand>
</feature>
<feature type="binding site" evidence="2">
    <location>
        <position position="117"/>
    </location>
    <ligand>
        <name>ATP</name>
        <dbReference type="ChEBI" id="CHEBI:30616"/>
    </ligand>
</feature>
<organismHost>
    <name type="scientific">Homo sapiens</name>
    <name type="common">Human</name>
    <dbReference type="NCBI Taxonomy" id="9606"/>
</organismHost>
<sequence length="439" mass="52130">MGVANDSSPEYQWMSPHRLSDTVILGDCLYFNNIMSQLDLHQNWAPSVRLLNYFKNFNKETLLKIEENDYINSSFFQQKDKRFYPINDDFYHISTGGYGIVFKIDNYVVKFVFEATKLYSPMETTAEFTVPKFLYNNLKGDEKKLIVCAWAMGLNYKLTFLHTLYKRVLHMLLLLIQTMDGQELSLRYSSKVFLKAFNERKDSIKFVKLLSHFYPAVINSNINVINYFNRMFHFFEHEKRTNYEYERGNIIIFPLALYSADKVDTELAIKLGFKSLVQYIKFIFLQMALLYIKIYELPCCDNFLHADLKPDNILLFDSNEPIIIHLKDKKFVFNERIKSALNDFDFSQVAGIINKKIKNNFKVKHNWYYDFHFFVHTLLKTYPEIEKDIEFSTALEEFIMCTKTDCDKYRLKVSILHPISFLEKFIMRDIFSDWINGGN</sequence>